<keyword id="KW-0066">ATP synthesis</keyword>
<keyword id="KW-0067">ATP-binding</keyword>
<keyword id="KW-0997">Cell inner membrane</keyword>
<keyword id="KW-1003">Cell membrane</keyword>
<keyword id="KW-0139">CF(1)</keyword>
<keyword id="KW-0375">Hydrogen ion transport</keyword>
<keyword id="KW-0406">Ion transport</keyword>
<keyword id="KW-0472">Membrane</keyword>
<keyword id="KW-0547">Nucleotide-binding</keyword>
<keyword id="KW-1278">Translocase</keyword>
<keyword id="KW-0813">Transport</keyword>
<reference key="1">
    <citation type="journal article" date="2007" name="Environ. Microbiol.">
        <title>Whole-genome analysis of the ammonia-oxidizing bacterium, Nitrosomonas eutropha C91: implications for niche adaptation.</title>
        <authorList>
            <person name="Stein L.Y."/>
            <person name="Arp D.J."/>
            <person name="Berube P.M."/>
            <person name="Chain P.S."/>
            <person name="Hauser L."/>
            <person name="Jetten M.S."/>
            <person name="Klotz M.G."/>
            <person name="Larimer F.W."/>
            <person name="Norton J.M."/>
            <person name="Op den Camp H.J.M."/>
            <person name="Shin M."/>
            <person name="Wei X."/>
        </authorList>
    </citation>
    <scope>NUCLEOTIDE SEQUENCE [LARGE SCALE GENOMIC DNA]</scope>
    <source>
        <strain>DSM 101675 / C91 / Nm57</strain>
    </source>
</reference>
<comment type="function">
    <text evidence="1">Produces ATP from ADP in the presence of a proton gradient across the membrane. The alpha chain is a regulatory subunit.</text>
</comment>
<comment type="catalytic activity">
    <reaction evidence="1">
        <text>ATP + H2O + 4 H(+)(in) = ADP + phosphate + 5 H(+)(out)</text>
        <dbReference type="Rhea" id="RHEA:57720"/>
        <dbReference type="ChEBI" id="CHEBI:15377"/>
        <dbReference type="ChEBI" id="CHEBI:15378"/>
        <dbReference type="ChEBI" id="CHEBI:30616"/>
        <dbReference type="ChEBI" id="CHEBI:43474"/>
        <dbReference type="ChEBI" id="CHEBI:456216"/>
        <dbReference type="EC" id="7.1.2.2"/>
    </reaction>
</comment>
<comment type="subunit">
    <text evidence="1">F-type ATPases have 2 components, CF(1) - the catalytic core - and CF(0) - the membrane proton channel. CF(1) has five subunits: alpha(3), beta(3), gamma(1), delta(1), epsilon(1). CF(0) has three main subunits: a(1), b(2) and c(9-12). The alpha and beta chains form an alternating ring which encloses part of the gamma chain. CF(1) is attached to CF(0) by a central stalk formed by the gamma and epsilon chains, while a peripheral stalk is formed by the delta and b chains.</text>
</comment>
<comment type="subcellular location">
    <subcellularLocation>
        <location evidence="1">Cell inner membrane</location>
        <topology evidence="1">Peripheral membrane protein</topology>
    </subcellularLocation>
</comment>
<comment type="similarity">
    <text evidence="1">Belongs to the ATPase alpha/beta chains family.</text>
</comment>
<evidence type="ECO:0000255" key="1">
    <source>
        <dbReference type="HAMAP-Rule" id="MF_01346"/>
    </source>
</evidence>
<feature type="chain" id="PRO_0000339041" description="ATP synthase subunit alpha 1">
    <location>
        <begin position="1"/>
        <end position="513"/>
    </location>
</feature>
<feature type="binding site" evidence="1">
    <location>
        <begin position="169"/>
        <end position="176"/>
    </location>
    <ligand>
        <name>ATP</name>
        <dbReference type="ChEBI" id="CHEBI:30616"/>
    </ligand>
</feature>
<feature type="site" description="Required for activity" evidence="1">
    <location>
        <position position="373"/>
    </location>
</feature>
<organism>
    <name type="scientific">Nitrosomonas eutropha (strain DSM 101675 / C91 / Nm57)</name>
    <dbReference type="NCBI Taxonomy" id="335283"/>
    <lineage>
        <taxon>Bacteria</taxon>
        <taxon>Pseudomonadati</taxon>
        <taxon>Pseudomonadota</taxon>
        <taxon>Betaproteobacteria</taxon>
        <taxon>Nitrosomonadales</taxon>
        <taxon>Nitrosomonadaceae</taxon>
        <taxon>Nitrosomonas</taxon>
    </lineage>
</organism>
<protein>
    <recommendedName>
        <fullName evidence="1">ATP synthase subunit alpha 1</fullName>
        <ecNumber evidence="1">7.1.2.2</ecNumber>
    </recommendedName>
    <alternativeName>
        <fullName evidence="1">ATP synthase F1 sector subunit alpha 1</fullName>
    </alternativeName>
    <alternativeName>
        <fullName evidence="1">F-ATPase subunit alpha 1</fullName>
    </alternativeName>
</protein>
<accession>Q0AJB2</accession>
<dbReference type="EC" id="7.1.2.2" evidence="1"/>
<dbReference type="EMBL" id="CP000450">
    <property type="protein sequence ID" value="ABI58559.1"/>
    <property type="molecule type" value="Genomic_DNA"/>
</dbReference>
<dbReference type="RefSeq" id="WP_011633403.1">
    <property type="nucleotide sequence ID" value="NC_008344.1"/>
</dbReference>
<dbReference type="SMR" id="Q0AJB2"/>
<dbReference type="STRING" id="335283.Neut_0275"/>
<dbReference type="KEGG" id="net:Neut_0275"/>
<dbReference type="eggNOG" id="COG0056">
    <property type="taxonomic scope" value="Bacteria"/>
</dbReference>
<dbReference type="HOGENOM" id="CLU_010091_2_1_4"/>
<dbReference type="OrthoDB" id="9803053at2"/>
<dbReference type="Proteomes" id="UP000001966">
    <property type="component" value="Chromosome"/>
</dbReference>
<dbReference type="GO" id="GO:0005886">
    <property type="term" value="C:plasma membrane"/>
    <property type="evidence" value="ECO:0007669"/>
    <property type="project" value="UniProtKB-SubCell"/>
</dbReference>
<dbReference type="GO" id="GO:0045259">
    <property type="term" value="C:proton-transporting ATP synthase complex"/>
    <property type="evidence" value="ECO:0007669"/>
    <property type="project" value="UniProtKB-KW"/>
</dbReference>
<dbReference type="GO" id="GO:0043531">
    <property type="term" value="F:ADP binding"/>
    <property type="evidence" value="ECO:0007669"/>
    <property type="project" value="TreeGrafter"/>
</dbReference>
<dbReference type="GO" id="GO:0005524">
    <property type="term" value="F:ATP binding"/>
    <property type="evidence" value="ECO:0007669"/>
    <property type="project" value="UniProtKB-UniRule"/>
</dbReference>
<dbReference type="GO" id="GO:0046933">
    <property type="term" value="F:proton-transporting ATP synthase activity, rotational mechanism"/>
    <property type="evidence" value="ECO:0007669"/>
    <property type="project" value="UniProtKB-UniRule"/>
</dbReference>
<dbReference type="CDD" id="cd18113">
    <property type="entry name" value="ATP-synt_F1_alpha_C"/>
    <property type="match status" value="1"/>
</dbReference>
<dbReference type="CDD" id="cd18116">
    <property type="entry name" value="ATP-synt_F1_alpha_N"/>
    <property type="match status" value="1"/>
</dbReference>
<dbReference type="CDD" id="cd01132">
    <property type="entry name" value="F1-ATPase_alpha_CD"/>
    <property type="match status" value="1"/>
</dbReference>
<dbReference type="FunFam" id="1.20.150.20:FF:000001">
    <property type="entry name" value="ATP synthase subunit alpha"/>
    <property type="match status" value="1"/>
</dbReference>
<dbReference type="FunFam" id="2.40.30.20:FF:000001">
    <property type="entry name" value="ATP synthase subunit alpha"/>
    <property type="match status" value="1"/>
</dbReference>
<dbReference type="FunFam" id="3.40.50.300:FF:000002">
    <property type="entry name" value="ATP synthase subunit alpha"/>
    <property type="match status" value="1"/>
</dbReference>
<dbReference type="Gene3D" id="2.40.30.20">
    <property type="match status" value="1"/>
</dbReference>
<dbReference type="Gene3D" id="1.20.150.20">
    <property type="entry name" value="ATP synthase alpha/beta chain, C-terminal domain"/>
    <property type="match status" value="1"/>
</dbReference>
<dbReference type="Gene3D" id="3.40.50.300">
    <property type="entry name" value="P-loop containing nucleotide triphosphate hydrolases"/>
    <property type="match status" value="1"/>
</dbReference>
<dbReference type="HAMAP" id="MF_01346">
    <property type="entry name" value="ATP_synth_alpha_bact"/>
    <property type="match status" value="1"/>
</dbReference>
<dbReference type="InterPro" id="IPR023366">
    <property type="entry name" value="ATP_synth_asu-like_sf"/>
</dbReference>
<dbReference type="InterPro" id="IPR000793">
    <property type="entry name" value="ATP_synth_asu_C"/>
</dbReference>
<dbReference type="InterPro" id="IPR038376">
    <property type="entry name" value="ATP_synth_asu_C_sf"/>
</dbReference>
<dbReference type="InterPro" id="IPR033732">
    <property type="entry name" value="ATP_synth_F1_a_nt-bd_dom"/>
</dbReference>
<dbReference type="InterPro" id="IPR005294">
    <property type="entry name" value="ATP_synth_F1_asu"/>
</dbReference>
<dbReference type="InterPro" id="IPR020003">
    <property type="entry name" value="ATPase_a/bsu_AS"/>
</dbReference>
<dbReference type="InterPro" id="IPR004100">
    <property type="entry name" value="ATPase_F1/V1/A1_a/bsu_N"/>
</dbReference>
<dbReference type="InterPro" id="IPR036121">
    <property type="entry name" value="ATPase_F1/V1/A1_a/bsu_N_sf"/>
</dbReference>
<dbReference type="InterPro" id="IPR000194">
    <property type="entry name" value="ATPase_F1/V1/A1_a/bsu_nucl-bd"/>
</dbReference>
<dbReference type="InterPro" id="IPR027417">
    <property type="entry name" value="P-loop_NTPase"/>
</dbReference>
<dbReference type="NCBIfam" id="TIGR00962">
    <property type="entry name" value="atpA"/>
    <property type="match status" value="1"/>
</dbReference>
<dbReference type="NCBIfam" id="NF009884">
    <property type="entry name" value="PRK13343.1"/>
    <property type="match status" value="1"/>
</dbReference>
<dbReference type="PANTHER" id="PTHR48082">
    <property type="entry name" value="ATP SYNTHASE SUBUNIT ALPHA, MITOCHONDRIAL"/>
    <property type="match status" value="1"/>
</dbReference>
<dbReference type="PANTHER" id="PTHR48082:SF2">
    <property type="entry name" value="ATP SYNTHASE SUBUNIT ALPHA, MITOCHONDRIAL"/>
    <property type="match status" value="1"/>
</dbReference>
<dbReference type="Pfam" id="PF00006">
    <property type="entry name" value="ATP-synt_ab"/>
    <property type="match status" value="1"/>
</dbReference>
<dbReference type="Pfam" id="PF00306">
    <property type="entry name" value="ATP-synt_ab_C"/>
    <property type="match status" value="1"/>
</dbReference>
<dbReference type="Pfam" id="PF02874">
    <property type="entry name" value="ATP-synt_ab_N"/>
    <property type="match status" value="1"/>
</dbReference>
<dbReference type="PIRSF" id="PIRSF039088">
    <property type="entry name" value="F_ATPase_subunit_alpha"/>
    <property type="match status" value="1"/>
</dbReference>
<dbReference type="SUPFAM" id="SSF47917">
    <property type="entry name" value="C-terminal domain of alpha and beta subunits of F1 ATP synthase"/>
    <property type="match status" value="1"/>
</dbReference>
<dbReference type="SUPFAM" id="SSF50615">
    <property type="entry name" value="N-terminal domain of alpha and beta subunits of F1 ATP synthase"/>
    <property type="match status" value="1"/>
</dbReference>
<dbReference type="SUPFAM" id="SSF52540">
    <property type="entry name" value="P-loop containing nucleoside triphosphate hydrolases"/>
    <property type="match status" value="1"/>
</dbReference>
<dbReference type="PROSITE" id="PS00152">
    <property type="entry name" value="ATPASE_ALPHA_BETA"/>
    <property type="match status" value="1"/>
</dbReference>
<name>ATPA1_NITEC</name>
<gene>
    <name evidence="1" type="primary">atpA1</name>
    <name type="ordered locus">Neut_0275</name>
</gene>
<proteinExistence type="inferred from homology"/>
<sequence length="513" mass="55240">MQLNPSEISELIKSKIEGLSVTSEFRTQGTIVSLTDGIVRVHGLSDVMQGEMLEFPGGTYGLALNLERDSVGAVILGAYEHLTEGDIVKCTGRVLEVPVGEALLGRVVNALGQPIDGKGPVAAQGMEPIEKIAPGVISRKSVDQPMQTGLKSVDSMVPIGRGQRELIIGDRQTGKTAVAIDAIINQKGEDMICIYVAIGQKASSIANVVRKLEEVGAMAYTIVVVASASESAAMQYIAPYSGCTMGEYFRDKGQDALIVYDDLTKQAWAYRQISLLLRRPPGREAYPGDVFYLHSRLLERAARVNADYVEKATGGKVKGKTGSLTALPIIETQAGDVTAFVPTNVISITDGQIFLESDLFNAGIRPAINAGVSVSRVGGAAQTKVIKKLGGGIRLALAQYRELAAFAQFASDLDEATRKQLERGKMATELMKQAQYATLKVSEMALTLFALNKGYFDDVDIKRALAFESALKSHVRSHHAAILDKIETTKELDAETEKALEAAIQEFKQNGIY</sequence>